<comment type="function">
    <text>Ferredoxins are iron-sulfur proteins that transfer electrons in a wide variety of metabolic reactions.</text>
</comment>
<comment type="cofactor">
    <cofactor>
        <name>[4Fe-4S] cluster</name>
        <dbReference type="ChEBI" id="CHEBI:49883"/>
    </cofactor>
    <text>Binds 2 [4Fe-4S] clusters.</text>
</comment>
<protein>
    <recommendedName>
        <fullName>Ferredoxin-1</fullName>
    </recommendedName>
    <alternativeName>
        <fullName>Ferredoxin I</fullName>
        <shortName>FdI</shortName>
    </alternativeName>
</protein>
<sequence>MALYITEECTYCGACEPECPTNAISAGSEIYVIDAASCNECAGFADSPACVAVCPAECIVQG</sequence>
<name>FER1_CHLTE</name>
<proteinExistence type="inferred from homology"/>
<accession>Q8KCZ6</accession>
<dbReference type="EMBL" id="AE006470">
    <property type="protein sequence ID" value="AAM72491.1"/>
    <property type="molecule type" value="Genomic_DNA"/>
</dbReference>
<dbReference type="RefSeq" id="NP_662149.1">
    <property type="nucleotide sequence ID" value="NC_002932.3"/>
</dbReference>
<dbReference type="RefSeq" id="WP_010932930.1">
    <property type="nucleotide sequence ID" value="NC_002932.3"/>
</dbReference>
<dbReference type="SMR" id="Q8KCZ6"/>
<dbReference type="STRING" id="194439.CT1261"/>
<dbReference type="EnsemblBacteria" id="AAM72491">
    <property type="protein sequence ID" value="AAM72491"/>
    <property type="gene ID" value="CT1261"/>
</dbReference>
<dbReference type="KEGG" id="cte:CT1261"/>
<dbReference type="PATRIC" id="fig|194439.7.peg.1149"/>
<dbReference type="eggNOG" id="COG1145">
    <property type="taxonomic scope" value="Bacteria"/>
</dbReference>
<dbReference type="HOGENOM" id="CLU_139698_11_0_10"/>
<dbReference type="OrthoDB" id="9803397at2"/>
<dbReference type="Proteomes" id="UP000001007">
    <property type="component" value="Chromosome"/>
</dbReference>
<dbReference type="GO" id="GO:0051539">
    <property type="term" value="F:4 iron, 4 sulfur cluster binding"/>
    <property type="evidence" value="ECO:0007669"/>
    <property type="project" value="UniProtKB-KW"/>
</dbReference>
<dbReference type="GO" id="GO:0046872">
    <property type="term" value="F:metal ion binding"/>
    <property type="evidence" value="ECO:0007669"/>
    <property type="project" value="UniProtKB-KW"/>
</dbReference>
<dbReference type="FunFam" id="3.30.70.20:FF:000045">
    <property type="entry name" value="Ferredoxin, 4Fe-4S"/>
    <property type="match status" value="1"/>
</dbReference>
<dbReference type="Gene3D" id="3.30.70.20">
    <property type="match status" value="1"/>
</dbReference>
<dbReference type="InterPro" id="IPR017896">
    <property type="entry name" value="4Fe4S_Fe-S-bd"/>
</dbReference>
<dbReference type="InterPro" id="IPR017900">
    <property type="entry name" value="4Fe4S_Fe_S_CS"/>
</dbReference>
<dbReference type="Pfam" id="PF00037">
    <property type="entry name" value="Fer4"/>
    <property type="match status" value="1"/>
</dbReference>
<dbReference type="SUPFAM" id="SSF54862">
    <property type="entry name" value="4Fe-4S ferredoxins"/>
    <property type="match status" value="1"/>
</dbReference>
<dbReference type="PROSITE" id="PS00198">
    <property type="entry name" value="4FE4S_FER_1"/>
    <property type="match status" value="1"/>
</dbReference>
<dbReference type="PROSITE" id="PS51379">
    <property type="entry name" value="4FE4S_FER_2"/>
    <property type="match status" value="2"/>
</dbReference>
<gene>
    <name type="ordered locus">CT1261</name>
</gene>
<feature type="initiator methionine" description="Removed" evidence="1">
    <location>
        <position position="1"/>
    </location>
</feature>
<feature type="chain" id="PRO_0000159124" description="Ferredoxin-1">
    <location>
        <begin position="2"/>
        <end position="62"/>
    </location>
</feature>
<feature type="domain" description="4Fe-4S ferredoxin-type 1" evidence="2">
    <location>
        <begin position="2"/>
        <end position="28"/>
    </location>
</feature>
<feature type="domain" description="4Fe-4S ferredoxin-type 2" evidence="2">
    <location>
        <begin position="29"/>
        <end position="62"/>
    </location>
</feature>
<feature type="binding site" evidence="1">
    <location>
        <position position="9"/>
    </location>
    <ligand>
        <name>[4Fe-4S] cluster</name>
        <dbReference type="ChEBI" id="CHEBI:49883"/>
        <label>1</label>
    </ligand>
</feature>
<feature type="binding site" evidence="1">
    <location>
        <position position="12"/>
    </location>
    <ligand>
        <name>[4Fe-4S] cluster</name>
        <dbReference type="ChEBI" id="CHEBI:49883"/>
        <label>1</label>
    </ligand>
</feature>
<feature type="binding site" evidence="1">
    <location>
        <position position="15"/>
    </location>
    <ligand>
        <name>[4Fe-4S] cluster</name>
        <dbReference type="ChEBI" id="CHEBI:49883"/>
        <label>1</label>
    </ligand>
</feature>
<feature type="binding site" evidence="1">
    <location>
        <position position="19"/>
    </location>
    <ligand>
        <name>[4Fe-4S] cluster</name>
        <dbReference type="ChEBI" id="CHEBI:49883"/>
        <label>2</label>
    </ligand>
</feature>
<feature type="binding site" evidence="1">
    <location>
        <position position="38"/>
    </location>
    <ligand>
        <name>[4Fe-4S] cluster</name>
        <dbReference type="ChEBI" id="CHEBI:49883"/>
        <label>2</label>
    </ligand>
</feature>
<feature type="binding site" evidence="1">
    <location>
        <position position="41"/>
    </location>
    <ligand>
        <name>[4Fe-4S] cluster</name>
        <dbReference type="ChEBI" id="CHEBI:49883"/>
        <label>2</label>
    </ligand>
</feature>
<feature type="binding site" evidence="1">
    <location>
        <position position="50"/>
    </location>
    <ligand>
        <name>[4Fe-4S] cluster</name>
        <dbReference type="ChEBI" id="CHEBI:49883"/>
        <label>2</label>
    </ligand>
</feature>
<feature type="binding site" evidence="1">
    <location>
        <position position="54"/>
    </location>
    <ligand>
        <name>[4Fe-4S] cluster</name>
        <dbReference type="ChEBI" id="CHEBI:49883"/>
        <label>1</label>
    </ligand>
</feature>
<keyword id="KW-0004">4Fe-4S</keyword>
<keyword id="KW-0249">Electron transport</keyword>
<keyword id="KW-0408">Iron</keyword>
<keyword id="KW-0411">Iron-sulfur</keyword>
<keyword id="KW-0479">Metal-binding</keyword>
<keyword id="KW-1185">Reference proteome</keyword>
<keyword id="KW-0677">Repeat</keyword>
<keyword id="KW-0813">Transport</keyword>
<evidence type="ECO:0000250" key="1"/>
<evidence type="ECO:0000255" key="2">
    <source>
        <dbReference type="PROSITE-ProRule" id="PRU00711"/>
    </source>
</evidence>
<organism>
    <name type="scientific">Chlorobaculum tepidum (strain ATCC 49652 / DSM 12025 / NBRC 103806 / TLS)</name>
    <name type="common">Chlorobium tepidum</name>
    <dbReference type="NCBI Taxonomy" id="194439"/>
    <lineage>
        <taxon>Bacteria</taxon>
        <taxon>Pseudomonadati</taxon>
        <taxon>Chlorobiota</taxon>
        <taxon>Chlorobiia</taxon>
        <taxon>Chlorobiales</taxon>
        <taxon>Chlorobiaceae</taxon>
        <taxon>Chlorobaculum</taxon>
    </lineage>
</organism>
<reference key="1">
    <citation type="journal article" date="2002" name="Proc. Natl. Acad. Sci. U.S.A.">
        <title>The complete genome sequence of Chlorobium tepidum TLS, a photosynthetic, anaerobic, green-sulfur bacterium.</title>
        <authorList>
            <person name="Eisen J.A."/>
            <person name="Nelson K.E."/>
            <person name="Paulsen I.T."/>
            <person name="Heidelberg J.F."/>
            <person name="Wu M."/>
            <person name="Dodson R.J."/>
            <person name="DeBoy R.T."/>
            <person name="Gwinn M.L."/>
            <person name="Nelson W.C."/>
            <person name="Haft D.H."/>
            <person name="Hickey E.K."/>
            <person name="Peterson J.D."/>
            <person name="Durkin A.S."/>
            <person name="Kolonay J.F."/>
            <person name="Yang F."/>
            <person name="Holt I.E."/>
            <person name="Umayam L.A."/>
            <person name="Mason T.M."/>
            <person name="Brenner M."/>
            <person name="Shea T.P."/>
            <person name="Parksey D.S."/>
            <person name="Nierman W.C."/>
            <person name="Feldblyum T.V."/>
            <person name="Hansen C.L."/>
            <person name="Craven M.B."/>
            <person name="Radune D."/>
            <person name="Vamathevan J.J."/>
            <person name="Khouri H.M."/>
            <person name="White O."/>
            <person name="Gruber T.M."/>
            <person name="Ketchum K.A."/>
            <person name="Venter J.C."/>
            <person name="Tettelin H."/>
            <person name="Bryant D.A."/>
            <person name="Fraser C.M."/>
        </authorList>
    </citation>
    <scope>NUCLEOTIDE SEQUENCE [LARGE SCALE GENOMIC DNA]</scope>
    <source>
        <strain>ATCC 49652 / DSM 12025 / NBRC 103806 / TLS</strain>
    </source>
</reference>